<comment type="function">
    <text evidence="3 4 5">Transcription factor that promotes the production of melanin, a pigment that serves as antioxidant, reactive oxygen species (ROS) scavenger and that protect fungal pathogens from radiation and host immune responses.</text>
</comment>
<comment type="subcellular location">
    <subcellularLocation>
        <location evidence="5">Nucleus</location>
    </subcellularLocation>
    <subcellularLocation>
        <location evidence="5">Cytoplasm</location>
    </subcellularLocation>
    <text evidence="5">Evenly distributed throughout the cell under nutrient-rich conditions, but rapidly translocates to the nucleus in response to nutrient starvation.</text>
</comment>
<comment type="induction">
    <text evidence="5">Expression is induced by nutrient starvation (PubMed:31575776). Expression under conditions of nutrient starvation is positively regulates by HOB1 (PubMed:31575776).</text>
</comment>
<comment type="disruption phenotype">
    <text evidence="3 5">Reduces LAC1 induction mediated by nutrient starvation and leads to greatly reduced melanin production.</text>
</comment>
<comment type="similarity">
    <text evidence="7">Belongs to the bZIP family.</text>
</comment>
<organism>
    <name type="scientific">Cryptococcus neoformans var. grubii serotype A (strain H99 / ATCC 208821 / CBS 10515 / FGSC 9487)</name>
    <name type="common">Filobasidiella neoformans var. grubii</name>
    <dbReference type="NCBI Taxonomy" id="235443"/>
    <lineage>
        <taxon>Eukaryota</taxon>
        <taxon>Fungi</taxon>
        <taxon>Dikarya</taxon>
        <taxon>Basidiomycota</taxon>
        <taxon>Agaricomycotina</taxon>
        <taxon>Tremellomycetes</taxon>
        <taxon>Tremellales</taxon>
        <taxon>Cryptococcaceae</taxon>
        <taxon>Cryptococcus</taxon>
        <taxon>Cryptococcus neoformans species complex</taxon>
    </lineage>
</organism>
<feature type="chain" id="PRO_0000460783" description="BZIP domain-containing transcription factor BZP4">
    <location>
        <begin position="1"/>
        <end position="341"/>
    </location>
</feature>
<feature type="domain" description="bZIP" evidence="1">
    <location>
        <begin position="250"/>
        <end position="308"/>
    </location>
</feature>
<feature type="region of interest" description="Disordered" evidence="2">
    <location>
        <begin position="1"/>
        <end position="95"/>
    </location>
</feature>
<feature type="region of interest" description="Disordered" evidence="2">
    <location>
        <begin position="118"/>
        <end position="254"/>
    </location>
</feature>
<feature type="region of interest" description="Basic motif" evidence="1">
    <location>
        <begin position="250"/>
        <end position="269"/>
    </location>
</feature>
<feature type="region of interest" description="Leucine-zipper" evidence="1">
    <location>
        <begin position="279"/>
        <end position="307"/>
    </location>
</feature>
<feature type="compositionally biased region" description="Polar residues" evidence="2">
    <location>
        <begin position="1"/>
        <end position="32"/>
    </location>
</feature>
<feature type="compositionally biased region" description="Polar residues" evidence="2">
    <location>
        <begin position="61"/>
        <end position="76"/>
    </location>
</feature>
<feature type="compositionally biased region" description="Polar residues" evidence="2">
    <location>
        <begin position="128"/>
        <end position="139"/>
    </location>
</feature>
<feature type="compositionally biased region" description="Polar residues" evidence="2">
    <location>
        <begin position="150"/>
        <end position="163"/>
    </location>
</feature>
<feature type="compositionally biased region" description="Low complexity" evidence="2">
    <location>
        <begin position="178"/>
        <end position="192"/>
    </location>
</feature>
<feature type="compositionally biased region" description="Basic and acidic residues" evidence="2">
    <location>
        <begin position="225"/>
        <end position="234"/>
    </location>
</feature>
<feature type="compositionally biased region" description="Basic and acidic residues" evidence="2">
    <location>
        <begin position="242"/>
        <end position="254"/>
    </location>
</feature>
<gene>
    <name evidence="6" type="primary">BZP4</name>
    <name type="ORF">CNAG_03346</name>
</gene>
<sequence length="341" mass="37875">MESSWPAQSSFSYYNQGSMQTSSRHASSPTNEYSDRTPRRSAAQPQMPAFLPPPPPHGHQLTESGGDSLPSFSHSLYSPYHGPGGNLPSSNPHGMAHSMPSYSHISALSGTGSGFQYTNHSPMGLNEPLTSHSRSQITHSYHDPPRLPGYSSSPNLHQLSPVSPTAHLLPSMQPPSASPSSSSFPSSIPRTPATLPKGVKRHSLGSEQSFDSWDDEQEMSSGKVTGDRKHEKDSQPWGMPQEEYKKLNPKDKKQVRNRIGARRFRAKRKDYVNQLEAGIRLRDDEITNLQSQLESQRNEINELRLQLKLPLLPRGELSGLGLTMETQGQMERWENNDSMSR</sequence>
<accession>J9VQ26</accession>
<keyword id="KW-0963">Cytoplasm</keyword>
<keyword id="KW-0238">DNA-binding</keyword>
<keyword id="KW-0470">Melanin biosynthesis</keyword>
<keyword id="KW-0539">Nucleus</keyword>
<keyword id="KW-0804">Transcription</keyword>
<keyword id="KW-0805">Transcription regulation</keyword>
<name>BZP4_CRYNH</name>
<reference key="1">
    <citation type="journal article" date="2014" name="PLoS Genet.">
        <title>Analysis of the genome and transcriptome of Cryptococcus neoformans var. grubii reveals complex RNA expression and microevolution leading to virulence attenuation.</title>
        <authorList>
            <person name="Janbon G."/>
            <person name="Ormerod K.L."/>
            <person name="Paulet D."/>
            <person name="Byrnes E.J. III"/>
            <person name="Yadav V."/>
            <person name="Chatterjee G."/>
            <person name="Mullapudi N."/>
            <person name="Hon C.-C."/>
            <person name="Billmyre R.B."/>
            <person name="Brunel F."/>
            <person name="Bahn Y.-S."/>
            <person name="Chen W."/>
            <person name="Chen Y."/>
            <person name="Chow E.W.L."/>
            <person name="Coppee J.-Y."/>
            <person name="Floyd-Averette A."/>
            <person name="Gaillardin C."/>
            <person name="Gerik K.J."/>
            <person name="Goldberg J."/>
            <person name="Gonzalez-Hilarion S."/>
            <person name="Gujja S."/>
            <person name="Hamlin J.L."/>
            <person name="Hsueh Y.-P."/>
            <person name="Ianiri G."/>
            <person name="Jones S."/>
            <person name="Kodira C.D."/>
            <person name="Kozubowski L."/>
            <person name="Lam W."/>
            <person name="Marra M."/>
            <person name="Mesner L.D."/>
            <person name="Mieczkowski P.A."/>
            <person name="Moyrand F."/>
            <person name="Nielsen K."/>
            <person name="Proux C."/>
            <person name="Rossignol T."/>
            <person name="Schein J.E."/>
            <person name="Sun S."/>
            <person name="Wollschlaeger C."/>
            <person name="Wood I.A."/>
            <person name="Zeng Q."/>
            <person name="Neuveglise C."/>
            <person name="Newlon C.S."/>
            <person name="Perfect J.R."/>
            <person name="Lodge J.K."/>
            <person name="Idnurm A."/>
            <person name="Stajich J.E."/>
            <person name="Kronstad J.W."/>
            <person name="Sanyal K."/>
            <person name="Heitman J."/>
            <person name="Fraser J.A."/>
            <person name="Cuomo C.A."/>
            <person name="Dietrich F.S."/>
        </authorList>
    </citation>
    <scope>NUCLEOTIDE SEQUENCE [LARGE SCALE GENOMIC DNA]</scope>
    <source>
        <strain>H99 / ATCC 208821 / CBS 10515 / FGSC 9487</strain>
    </source>
</reference>
<reference key="2">
    <citation type="journal article" date="2015" name="Nat. Commun.">
        <title>Systematic functional profiling of transcription factor networks in Cryptococcus neoformans.</title>
        <authorList>
            <person name="Jung K.W."/>
            <person name="Yang D.H."/>
            <person name="Maeng S."/>
            <person name="Lee K.T."/>
            <person name="So Y.S."/>
            <person name="Hong J."/>
            <person name="Choi J."/>
            <person name="Byun H.J."/>
            <person name="Kim H."/>
            <person name="Bang S."/>
            <person name="Song M.H."/>
            <person name="Lee J.W."/>
            <person name="Kim M.S."/>
            <person name="Kim S.Y."/>
            <person name="Ji J.H."/>
            <person name="Park G."/>
            <person name="Kwon H."/>
            <person name="Cha S."/>
            <person name="Meyers G.L."/>
            <person name="Wang L.L."/>
            <person name="Jang J."/>
            <person name="Janbon G."/>
            <person name="Adedoyin G."/>
            <person name="Kim T."/>
            <person name="Averette A.K."/>
            <person name="Heitman J."/>
            <person name="Cheong E."/>
            <person name="Lee Y.H."/>
            <person name="Lee Y.W."/>
            <person name="Bahn Y.S."/>
        </authorList>
    </citation>
    <scope>IDENTIFICATION</scope>
    <scope>FUNCTION</scope>
    <scope>DISRUPTION PHENOTYPE</scope>
</reference>
<reference key="3">
    <citation type="journal article" date="2017" name="Genome Res.">
        <title>Population genomics and the evolution of virulence in the fungal pathogen Cryptococcus neoformans.</title>
        <authorList>
            <person name="Desjardins C.A."/>
            <person name="Giamberardino C."/>
            <person name="Sykes S.M."/>
            <person name="Yu C.H."/>
            <person name="Tenor J.L."/>
            <person name="Chen Y."/>
            <person name="Yang T."/>
            <person name="Jones A.M."/>
            <person name="Sun S."/>
            <person name="Haverkamp M.R."/>
            <person name="Heitman J."/>
            <person name="Litvintseva A.P."/>
            <person name="Perfect J.R."/>
            <person name="Cuomo C.A."/>
        </authorList>
    </citation>
    <scope>FUNCTION</scope>
</reference>
<reference key="4">
    <citation type="journal article" date="2019" name="MBio">
        <title>Unraveling melanin biosynthesis and signaling networks in Cryptococcus neoformans.</title>
        <authorList>
            <person name="Lee D."/>
            <person name="Jang E.H."/>
            <person name="Lee M."/>
            <person name="Kim S.W."/>
            <person name="Lee Y."/>
            <person name="Lee K.T."/>
            <person name="Bahn Y.S."/>
        </authorList>
    </citation>
    <scope>INDUCTION</scope>
    <scope>FUNCTION</scope>
    <scope>DISRUPTION PHENOTYPE</scope>
    <scope>SUBCELLULAR LOCATION</scope>
</reference>
<dbReference type="EMBL" id="CP003827">
    <property type="protein sequence ID" value="AFR96567.2"/>
    <property type="molecule type" value="Genomic_DNA"/>
</dbReference>
<dbReference type="RefSeq" id="XP_012050923.1">
    <property type="nucleotide sequence ID" value="XM_012195533.1"/>
</dbReference>
<dbReference type="SMR" id="J9VQ26"/>
<dbReference type="GeneID" id="23886857"/>
<dbReference type="KEGG" id="cng:CNAG_03346"/>
<dbReference type="VEuPathDB" id="FungiDB:CNAG_03346"/>
<dbReference type="HOGENOM" id="CLU_813851_0_0_1"/>
<dbReference type="OrthoDB" id="8688at5206"/>
<dbReference type="Proteomes" id="UP000010091">
    <property type="component" value="Chromosome 8"/>
</dbReference>
<dbReference type="GO" id="GO:0005737">
    <property type="term" value="C:cytoplasm"/>
    <property type="evidence" value="ECO:0007669"/>
    <property type="project" value="UniProtKB-SubCell"/>
</dbReference>
<dbReference type="GO" id="GO:0005634">
    <property type="term" value="C:nucleus"/>
    <property type="evidence" value="ECO:0007669"/>
    <property type="project" value="UniProtKB-SubCell"/>
</dbReference>
<dbReference type="GO" id="GO:0003677">
    <property type="term" value="F:DNA binding"/>
    <property type="evidence" value="ECO:0007669"/>
    <property type="project" value="UniProtKB-KW"/>
</dbReference>
<dbReference type="GO" id="GO:0003700">
    <property type="term" value="F:DNA-binding transcription factor activity"/>
    <property type="evidence" value="ECO:0007669"/>
    <property type="project" value="InterPro"/>
</dbReference>
<dbReference type="GO" id="GO:0042438">
    <property type="term" value="P:melanin biosynthetic process"/>
    <property type="evidence" value="ECO:0007669"/>
    <property type="project" value="UniProtKB-KW"/>
</dbReference>
<dbReference type="CDD" id="cd14810">
    <property type="entry name" value="bZIP_u1"/>
    <property type="match status" value="1"/>
</dbReference>
<dbReference type="Gene3D" id="1.20.5.170">
    <property type="match status" value="1"/>
</dbReference>
<dbReference type="InterPro" id="IPR004827">
    <property type="entry name" value="bZIP"/>
</dbReference>
<dbReference type="InterPro" id="IPR046347">
    <property type="entry name" value="bZIP_sf"/>
</dbReference>
<dbReference type="PANTHER" id="PTHR47416:SF8">
    <property type="entry name" value="BASIC-LEUCINE ZIPPER TRANSCRIPTION FACTOR E-RELATED"/>
    <property type="match status" value="1"/>
</dbReference>
<dbReference type="PANTHER" id="PTHR47416">
    <property type="entry name" value="BASIC-LEUCINE ZIPPER TRANSCRIPTION FACTOR F-RELATED"/>
    <property type="match status" value="1"/>
</dbReference>
<dbReference type="SMART" id="SM00338">
    <property type="entry name" value="BRLZ"/>
    <property type="match status" value="1"/>
</dbReference>
<dbReference type="SUPFAM" id="SSF57959">
    <property type="entry name" value="Leucine zipper domain"/>
    <property type="match status" value="1"/>
</dbReference>
<dbReference type="PROSITE" id="PS50217">
    <property type="entry name" value="BZIP"/>
    <property type="match status" value="1"/>
</dbReference>
<proteinExistence type="evidence at transcript level"/>
<protein>
    <recommendedName>
        <fullName evidence="6">BZIP domain-containing transcription factor BZP4</fullName>
    </recommendedName>
</protein>
<evidence type="ECO:0000255" key="1">
    <source>
        <dbReference type="PROSITE-ProRule" id="PRU00978"/>
    </source>
</evidence>
<evidence type="ECO:0000256" key="2">
    <source>
        <dbReference type="SAM" id="MobiDB-lite"/>
    </source>
</evidence>
<evidence type="ECO:0000269" key="3">
    <source>
    </source>
</evidence>
<evidence type="ECO:0000269" key="4">
    <source>
    </source>
</evidence>
<evidence type="ECO:0000269" key="5">
    <source>
    </source>
</evidence>
<evidence type="ECO:0000303" key="6">
    <source>
    </source>
</evidence>
<evidence type="ECO:0000305" key="7"/>